<name>RRF_CERS5</name>
<organism>
    <name type="scientific">Cereibacter sphaeroides (strain ATCC 17025 / ATH 2.4.3)</name>
    <name type="common">Rhodobacter sphaeroides</name>
    <dbReference type="NCBI Taxonomy" id="349102"/>
    <lineage>
        <taxon>Bacteria</taxon>
        <taxon>Pseudomonadati</taxon>
        <taxon>Pseudomonadota</taxon>
        <taxon>Alphaproteobacteria</taxon>
        <taxon>Rhodobacterales</taxon>
        <taxon>Paracoccaceae</taxon>
        <taxon>Cereibacter</taxon>
    </lineage>
</organism>
<dbReference type="EMBL" id="CP000661">
    <property type="protein sequence ID" value="ABP71042.1"/>
    <property type="molecule type" value="Genomic_DNA"/>
</dbReference>
<dbReference type="SMR" id="A4WUH8"/>
<dbReference type="STRING" id="349102.Rsph17025_2152"/>
<dbReference type="KEGG" id="rsq:Rsph17025_2152"/>
<dbReference type="eggNOG" id="COG0233">
    <property type="taxonomic scope" value="Bacteria"/>
</dbReference>
<dbReference type="HOGENOM" id="CLU_073981_2_0_5"/>
<dbReference type="BioCyc" id="RSPH349102:G1G8M-2221-MONOMER"/>
<dbReference type="GO" id="GO:0005829">
    <property type="term" value="C:cytosol"/>
    <property type="evidence" value="ECO:0007669"/>
    <property type="project" value="GOC"/>
</dbReference>
<dbReference type="GO" id="GO:0043023">
    <property type="term" value="F:ribosomal large subunit binding"/>
    <property type="evidence" value="ECO:0007669"/>
    <property type="project" value="TreeGrafter"/>
</dbReference>
<dbReference type="GO" id="GO:0002184">
    <property type="term" value="P:cytoplasmic translational termination"/>
    <property type="evidence" value="ECO:0007669"/>
    <property type="project" value="TreeGrafter"/>
</dbReference>
<dbReference type="CDD" id="cd00520">
    <property type="entry name" value="RRF"/>
    <property type="match status" value="1"/>
</dbReference>
<dbReference type="FunFam" id="1.10.132.20:FF:000001">
    <property type="entry name" value="Ribosome-recycling factor"/>
    <property type="match status" value="1"/>
</dbReference>
<dbReference type="FunFam" id="3.30.1360.40:FF:000001">
    <property type="entry name" value="Ribosome-recycling factor"/>
    <property type="match status" value="1"/>
</dbReference>
<dbReference type="Gene3D" id="3.30.1360.40">
    <property type="match status" value="1"/>
</dbReference>
<dbReference type="Gene3D" id="1.10.132.20">
    <property type="entry name" value="Ribosome-recycling factor"/>
    <property type="match status" value="1"/>
</dbReference>
<dbReference type="HAMAP" id="MF_00040">
    <property type="entry name" value="RRF"/>
    <property type="match status" value="1"/>
</dbReference>
<dbReference type="InterPro" id="IPR002661">
    <property type="entry name" value="Ribosome_recyc_fac"/>
</dbReference>
<dbReference type="InterPro" id="IPR023584">
    <property type="entry name" value="Ribosome_recyc_fac_dom"/>
</dbReference>
<dbReference type="InterPro" id="IPR036191">
    <property type="entry name" value="RRF_sf"/>
</dbReference>
<dbReference type="NCBIfam" id="TIGR00496">
    <property type="entry name" value="frr"/>
    <property type="match status" value="1"/>
</dbReference>
<dbReference type="PANTHER" id="PTHR20982:SF3">
    <property type="entry name" value="MITOCHONDRIAL RIBOSOME RECYCLING FACTOR PSEUDO 1"/>
    <property type="match status" value="1"/>
</dbReference>
<dbReference type="PANTHER" id="PTHR20982">
    <property type="entry name" value="RIBOSOME RECYCLING FACTOR"/>
    <property type="match status" value="1"/>
</dbReference>
<dbReference type="Pfam" id="PF01765">
    <property type="entry name" value="RRF"/>
    <property type="match status" value="1"/>
</dbReference>
<dbReference type="SUPFAM" id="SSF55194">
    <property type="entry name" value="Ribosome recycling factor, RRF"/>
    <property type="match status" value="1"/>
</dbReference>
<feature type="chain" id="PRO_0000341032" description="Ribosome-recycling factor">
    <location>
        <begin position="1"/>
        <end position="188"/>
    </location>
</feature>
<comment type="function">
    <text evidence="1">Responsible for the release of ribosomes from messenger RNA at the termination of protein biosynthesis. May increase the efficiency of translation by recycling ribosomes from one round of translation to another.</text>
</comment>
<comment type="subcellular location">
    <subcellularLocation>
        <location evidence="1">Cytoplasm</location>
    </subcellularLocation>
</comment>
<comment type="similarity">
    <text evidence="1">Belongs to the RRF family.</text>
</comment>
<accession>A4WUH8</accession>
<reference key="1">
    <citation type="submission" date="2007-04" db="EMBL/GenBank/DDBJ databases">
        <title>Complete sequence of chromosome of Rhodobacter sphaeroides ATCC 17025.</title>
        <authorList>
            <consortium name="US DOE Joint Genome Institute"/>
            <person name="Copeland A."/>
            <person name="Lucas S."/>
            <person name="Lapidus A."/>
            <person name="Barry K."/>
            <person name="Detter J.C."/>
            <person name="Glavina del Rio T."/>
            <person name="Hammon N."/>
            <person name="Israni S."/>
            <person name="Dalin E."/>
            <person name="Tice H."/>
            <person name="Pitluck S."/>
            <person name="Chertkov O."/>
            <person name="Brettin T."/>
            <person name="Bruce D."/>
            <person name="Han C."/>
            <person name="Schmutz J."/>
            <person name="Larimer F."/>
            <person name="Land M."/>
            <person name="Hauser L."/>
            <person name="Kyrpides N."/>
            <person name="Kim E."/>
            <person name="Richardson P."/>
            <person name="Mackenzie C."/>
            <person name="Choudhary M."/>
            <person name="Donohue T.J."/>
            <person name="Kaplan S."/>
        </authorList>
    </citation>
    <scope>NUCLEOTIDE SEQUENCE [LARGE SCALE GENOMIC DNA]</scope>
    <source>
        <strain>ATCC 17025 / ATH 2.4.3</strain>
    </source>
</reference>
<evidence type="ECO:0000255" key="1">
    <source>
        <dbReference type="HAMAP-Rule" id="MF_00040"/>
    </source>
</evidence>
<sequence>MSQEDLEIDLDAIQRRMDGAMHALRTEFGSLRTGRASASILEPIHVDAYGQQTPLNQLGTINVPEPRMVVINVWDKGMISKVERAIRDSGIGINPVVDGPIIRLPIPELNEERRKELTKVAAHYAEQARVAIRNVRRDGMDQIKKAKAAGMAEDDQKMWSDEVQALTDKAIAAVDKALEEKQKEIMQV</sequence>
<keyword id="KW-0963">Cytoplasm</keyword>
<keyword id="KW-0648">Protein biosynthesis</keyword>
<protein>
    <recommendedName>
        <fullName evidence="1">Ribosome-recycling factor</fullName>
        <shortName evidence="1">RRF</shortName>
    </recommendedName>
    <alternativeName>
        <fullName evidence="1">Ribosome-releasing factor</fullName>
    </alternativeName>
</protein>
<gene>
    <name evidence="1" type="primary">frr</name>
    <name type="ordered locus">Rsph17025_2152</name>
</gene>
<proteinExistence type="inferred from homology"/>